<dbReference type="SMR" id="C0HJI4"/>
<dbReference type="GO" id="GO:0005615">
    <property type="term" value="C:extracellular space"/>
    <property type="evidence" value="ECO:0007669"/>
    <property type="project" value="TreeGrafter"/>
</dbReference>
<dbReference type="GO" id="GO:0005179">
    <property type="term" value="F:hormone activity"/>
    <property type="evidence" value="ECO:0007669"/>
    <property type="project" value="UniProtKB-KW"/>
</dbReference>
<dbReference type="GO" id="GO:0006006">
    <property type="term" value="P:glucose metabolic process"/>
    <property type="evidence" value="ECO:0007669"/>
    <property type="project" value="UniProtKB-KW"/>
</dbReference>
<dbReference type="CDD" id="cd04367">
    <property type="entry name" value="IlGF_insulin_like"/>
    <property type="match status" value="1"/>
</dbReference>
<dbReference type="Gene3D" id="1.10.100.10">
    <property type="entry name" value="Insulin-like"/>
    <property type="match status" value="1"/>
</dbReference>
<dbReference type="InterPro" id="IPR004825">
    <property type="entry name" value="Insulin"/>
</dbReference>
<dbReference type="InterPro" id="IPR016179">
    <property type="entry name" value="Insulin-like"/>
</dbReference>
<dbReference type="InterPro" id="IPR036438">
    <property type="entry name" value="Insulin-like_sf"/>
</dbReference>
<dbReference type="InterPro" id="IPR022353">
    <property type="entry name" value="Insulin_CS"/>
</dbReference>
<dbReference type="InterPro" id="IPR022352">
    <property type="entry name" value="Insulin_family"/>
</dbReference>
<dbReference type="PANTHER" id="PTHR11454:SF9">
    <property type="entry name" value="INSULIN"/>
    <property type="match status" value="1"/>
</dbReference>
<dbReference type="PANTHER" id="PTHR11454">
    <property type="entry name" value="INSULIN/INSULIN GROWTH FACTOR"/>
    <property type="match status" value="1"/>
</dbReference>
<dbReference type="Pfam" id="PF00049">
    <property type="entry name" value="Insulin"/>
    <property type="match status" value="2"/>
</dbReference>
<dbReference type="PRINTS" id="PR00277">
    <property type="entry name" value="INSULIN"/>
</dbReference>
<dbReference type="PRINTS" id="PR00276">
    <property type="entry name" value="INSULINFAMLY"/>
</dbReference>
<dbReference type="SMART" id="SM00078">
    <property type="entry name" value="IlGF"/>
    <property type="match status" value="1"/>
</dbReference>
<dbReference type="SUPFAM" id="SSF56994">
    <property type="entry name" value="Insulin-like"/>
    <property type="match status" value="1"/>
</dbReference>
<dbReference type="PROSITE" id="PS00262">
    <property type="entry name" value="INSULIN"/>
    <property type="match status" value="1"/>
</dbReference>
<proteinExistence type="evidence at protein level"/>
<protein>
    <recommendedName>
        <fullName evidence="5">Insulin</fullName>
    </recommendedName>
    <component>
        <recommendedName>
            <fullName evidence="5">Insulin B chain</fullName>
        </recommendedName>
    </component>
    <component>
        <recommendedName>
            <fullName evidence="5">Insulin A chain</fullName>
        </recommendedName>
    </component>
</protein>
<name>INS_PAGMA</name>
<accession>C0HJI4</accession>
<comment type="function">
    <text evidence="1">Insulin decreases blood glucose concentration. It increases cell permeability to monosaccharides, amino acids and fatty acids. It accelerates glycolysis, the pentose phosphate cycle, and glycogen synthesis in liver (By similarity).</text>
</comment>
<comment type="subunit">
    <text evidence="1">Heterodimer of a B chain and an A chain linked by two disulfide bonds.</text>
</comment>
<comment type="subcellular location">
    <subcellularLocation>
        <location evidence="1">Secreted</location>
    </subcellularLocation>
</comment>
<comment type="similarity">
    <text evidence="3">Belongs to the insulin family.</text>
</comment>
<sequence>VAPPQHLCGSHLVDALYLVCGDRGFFYNPKGIVEQCCHRPCNIFDLQNYCN</sequence>
<feature type="peptide" id="PRO_0000429392" description="Insulin B chain" evidence="4">
    <location>
        <begin position="1"/>
        <end position="30"/>
    </location>
</feature>
<feature type="peptide" id="PRO_0000429393" description="Insulin A chain" evidence="4">
    <location>
        <begin position="31"/>
        <end position="51"/>
    </location>
</feature>
<feature type="disulfide bond" description="Interchain (between B and A chains)" evidence="2">
    <location>
        <begin position="8"/>
        <end position="37"/>
    </location>
</feature>
<feature type="disulfide bond" description="Interchain (between B and A chains)" evidence="2">
    <location>
        <begin position="20"/>
        <end position="50"/>
    </location>
</feature>
<feature type="disulfide bond" evidence="2">
    <location>
        <begin position="36"/>
        <end position="41"/>
    </location>
</feature>
<feature type="non-consecutive residues" evidence="5">
    <location>
        <begin position="30"/>
        <end position="31"/>
    </location>
</feature>
<keyword id="KW-0119">Carbohydrate metabolism</keyword>
<keyword id="KW-0903">Direct protein sequencing</keyword>
<keyword id="KW-1015">Disulfide bond</keyword>
<keyword id="KW-0313">Glucose metabolism</keyword>
<keyword id="KW-0372">Hormone</keyword>
<keyword id="KW-0964">Secreted</keyword>
<evidence type="ECO:0000250" key="1"/>
<evidence type="ECO:0000250" key="2">
    <source>
        <dbReference type="UniProtKB" id="P01339"/>
    </source>
</evidence>
<evidence type="ECO:0000255" key="3"/>
<evidence type="ECO:0000269" key="4">
    <source ref="1"/>
</evidence>
<evidence type="ECO:0000303" key="5">
    <source ref="1"/>
</evidence>
<evidence type="ECO:0000305" key="6"/>
<organism>
    <name type="scientific">Pagrus major</name>
    <name type="common">Red sea bream</name>
    <name type="synonym">Chrysophrys major</name>
    <dbReference type="NCBI Taxonomy" id="143350"/>
    <lineage>
        <taxon>Eukaryota</taxon>
        <taxon>Metazoa</taxon>
        <taxon>Chordata</taxon>
        <taxon>Craniata</taxon>
        <taxon>Vertebrata</taxon>
        <taxon>Euteleostomi</taxon>
        <taxon>Actinopterygii</taxon>
        <taxon>Neopterygii</taxon>
        <taxon>Teleostei</taxon>
        <taxon>Neoteleostei</taxon>
        <taxon>Acanthomorphata</taxon>
        <taxon>Eupercaria</taxon>
        <taxon>Spariformes</taxon>
        <taxon>Sparidae</taxon>
        <taxon>Pagrus</taxon>
    </lineage>
</organism>
<reference evidence="6" key="1">
    <citation type="submission" date="2014-04" db="UniProtKB">
        <title>Primary structure of insulin from red seabream (pagrus major).</title>
        <authorList>
            <person name="Andoh T."/>
        </authorList>
    </citation>
    <scope>PROTEIN SEQUENCE</scope>
</reference>